<sequence>MNVEPMYLTIFLIAGGIIFLVLFFHYVPFFLWLSAKVSGVNISLVQLFLMRIRNVPPYIIVPGMIEAHKAGLSNITRDELEAHYLAGGHVERVVHALVSASKANIELPFQMATAIDLAGRDVFEAVQMSVNPKVIDTPPVTAVAKDGIQLIAKARVTVRANIRQLVGGAGEDTILARVGEGIVSSIGSSENHKSVLENPDSISKLVLRKGLDAGTAFEILSIDIADIDIGKNIGAALQIDQANADKNIAQAKAEERRAMAVATEQEMKAKAEEARANVIQAEAEVPKAMAEAFRSGNLGIMDYYKMKNIQADTSMRENIAKPIGGATSKPLSD</sequence>
<reference key="1">
    <citation type="journal article" date="2004" name="Proc. Natl. Acad. Sci. U.S.A.">
        <title>Genomic analysis of Bacteroides fragilis reveals extensive DNA inversions regulating cell surface adaptation.</title>
        <authorList>
            <person name="Kuwahara T."/>
            <person name="Yamashita A."/>
            <person name="Hirakawa H."/>
            <person name="Nakayama H."/>
            <person name="Toh H."/>
            <person name="Okada N."/>
            <person name="Kuhara S."/>
            <person name="Hattori M."/>
            <person name="Hayashi T."/>
            <person name="Ohnishi Y."/>
        </authorList>
    </citation>
    <scope>NUCLEOTIDE SEQUENCE [LARGE SCALE GENOMIC DNA]</scope>
    <source>
        <strain>YCH46</strain>
    </source>
</reference>
<feature type="chain" id="PRO_0000232549" description="Flotillin-like protein FloA">
    <location>
        <begin position="1"/>
        <end position="333"/>
    </location>
</feature>
<feature type="transmembrane region" description="Helical" evidence="1">
    <location>
        <begin position="10"/>
        <end position="30"/>
    </location>
</feature>
<protein>
    <recommendedName>
        <fullName evidence="1">Flotillin-like protein FloA</fullName>
    </recommendedName>
</protein>
<proteinExistence type="inferred from homology"/>
<dbReference type="EMBL" id="AP006841">
    <property type="protein sequence ID" value="BAD47926.1"/>
    <property type="molecule type" value="Genomic_DNA"/>
</dbReference>
<dbReference type="RefSeq" id="WP_005785715.1">
    <property type="nucleotide sequence ID" value="NZ_UYXF01000021.1"/>
</dbReference>
<dbReference type="RefSeq" id="YP_098460.1">
    <property type="nucleotide sequence ID" value="NC_006347.1"/>
</dbReference>
<dbReference type="SMR" id="Q64X50"/>
<dbReference type="STRING" id="295405.BF1176"/>
<dbReference type="GeneID" id="60369092"/>
<dbReference type="KEGG" id="bfr:BF1176"/>
<dbReference type="PATRIC" id="fig|295405.11.peg.1163"/>
<dbReference type="HOGENOM" id="CLU_836378_0_0_10"/>
<dbReference type="OrthoDB" id="9808365at2"/>
<dbReference type="Proteomes" id="UP000002197">
    <property type="component" value="Chromosome"/>
</dbReference>
<dbReference type="GO" id="GO:0045121">
    <property type="term" value="C:membrane raft"/>
    <property type="evidence" value="ECO:0007669"/>
    <property type="project" value="UniProtKB-SubCell"/>
</dbReference>
<dbReference type="GO" id="GO:0005886">
    <property type="term" value="C:plasma membrane"/>
    <property type="evidence" value="ECO:0007669"/>
    <property type="project" value="UniProtKB-SubCell"/>
</dbReference>
<dbReference type="HAMAP" id="MF_01562">
    <property type="entry name" value="FloA"/>
    <property type="match status" value="1"/>
</dbReference>
<dbReference type="InterPro" id="IPR022853">
    <property type="entry name" value="FloA"/>
</dbReference>
<dbReference type="NCBIfam" id="NF010186">
    <property type="entry name" value="PRK13665.1"/>
    <property type="match status" value="1"/>
</dbReference>
<dbReference type="Pfam" id="PF12127">
    <property type="entry name" value="FloA"/>
    <property type="match status" value="1"/>
</dbReference>
<accession>Q64X50</accession>
<name>FLOA_BACFR</name>
<evidence type="ECO:0000255" key="1">
    <source>
        <dbReference type="HAMAP-Rule" id="MF_01562"/>
    </source>
</evidence>
<comment type="function">
    <text evidence="1">Found in functional membrane microdomains (FMM) that may be equivalent to eukaryotic membrane rafts. FMMs are highly dynamic and increase in number as cells age. Flotillins are thought to be important factors in membrane fluidity.</text>
</comment>
<comment type="subunit">
    <text evidence="1">Homooligomerizes.</text>
</comment>
<comment type="subcellular location">
    <subcellularLocation>
        <location evidence="1">Cell membrane</location>
        <topology evidence="1">Single-pass membrane protein</topology>
    </subcellularLocation>
    <subcellularLocation>
        <location evidence="1">Membrane raft</location>
        <topology evidence="1">Single-pass membrane protein</topology>
    </subcellularLocation>
</comment>
<comment type="similarity">
    <text evidence="1">Belongs to the flotillin-like FloA family.</text>
</comment>
<organism>
    <name type="scientific">Bacteroides fragilis (strain YCH46)</name>
    <dbReference type="NCBI Taxonomy" id="295405"/>
    <lineage>
        <taxon>Bacteria</taxon>
        <taxon>Pseudomonadati</taxon>
        <taxon>Bacteroidota</taxon>
        <taxon>Bacteroidia</taxon>
        <taxon>Bacteroidales</taxon>
        <taxon>Bacteroidaceae</taxon>
        <taxon>Bacteroides</taxon>
    </lineage>
</organism>
<keyword id="KW-1003">Cell membrane</keyword>
<keyword id="KW-0472">Membrane</keyword>
<keyword id="KW-0812">Transmembrane</keyword>
<keyword id="KW-1133">Transmembrane helix</keyword>
<gene>
    <name evidence="1" type="primary">floA</name>
    <name type="ordered locus">BF1176</name>
</gene>